<name>RS17_BLOFL</name>
<dbReference type="EMBL" id="BX248583">
    <property type="protein sequence ID" value="CAD83715.1"/>
    <property type="molecule type" value="Genomic_DNA"/>
</dbReference>
<dbReference type="SMR" id="Q7VQD9"/>
<dbReference type="STRING" id="203907.Bfl200"/>
<dbReference type="KEGG" id="bfl:Bfl200"/>
<dbReference type="eggNOG" id="COG0186">
    <property type="taxonomic scope" value="Bacteria"/>
</dbReference>
<dbReference type="HOGENOM" id="CLU_073626_1_1_6"/>
<dbReference type="OrthoDB" id="9811714at2"/>
<dbReference type="Proteomes" id="UP000002192">
    <property type="component" value="Chromosome"/>
</dbReference>
<dbReference type="GO" id="GO:0022627">
    <property type="term" value="C:cytosolic small ribosomal subunit"/>
    <property type="evidence" value="ECO:0007669"/>
    <property type="project" value="TreeGrafter"/>
</dbReference>
<dbReference type="GO" id="GO:0019843">
    <property type="term" value="F:rRNA binding"/>
    <property type="evidence" value="ECO:0007669"/>
    <property type="project" value="UniProtKB-UniRule"/>
</dbReference>
<dbReference type="GO" id="GO:0003735">
    <property type="term" value="F:structural constituent of ribosome"/>
    <property type="evidence" value="ECO:0007669"/>
    <property type="project" value="InterPro"/>
</dbReference>
<dbReference type="GO" id="GO:0006412">
    <property type="term" value="P:translation"/>
    <property type="evidence" value="ECO:0007669"/>
    <property type="project" value="UniProtKB-UniRule"/>
</dbReference>
<dbReference type="CDD" id="cd00364">
    <property type="entry name" value="Ribosomal_uS17"/>
    <property type="match status" value="1"/>
</dbReference>
<dbReference type="Gene3D" id="2.40.50.140">
    <property type="entry name" value="Nucleic acid-binding proteins"/>
    <property type="match status" value="1"/>
</dbReference>
<dbReference type="HAMAP" id="MF_01345_B">
    <property type="entry name" value="Ribosomal_uS17_B"/>
    <property type="match status" value="1"/>
</dbReference>
<dbReference type="InterPro" id="IPR012340">
    <property type="entry name" value="NA-bd_OB-fold"/>
</dbReference>
<dbReference type="InterPro" id="IPR000266">
    <property type="entry name" value="Ribosomal_uS17"/>
</dbReference>
<dbReference type="InterPro" id="IPR019984">
    <property type="entry name" value="Ribosomal_uS17_bact/chlr"/>
</dbReference>
<dbReference type="InterPro" id="IPR019979">
    <property type="entry name" value="Ribosomal_uS17_CS"/>
</dbReference>
<dbReference type="NCBIfam" id="NF004123">
    <property type="entry name" value="PRK05610.1"/>
    <property type="match status" value="1"/>
</dbReference>
<dbReference type="NCBIfam" id="TIGR03635">
    <property type="entry name" value="uS17_bact"/>
    <property type="match status" value="1"/>
</dbReference>
<dbReference type="PANTHER" id="PTHR10744">
    <property type="entry name" value="40S RIBOSOMAL PROTEIN S11 FAMILY MEMBER"/>
    <property type="match status" value="1"/>
</dbReference>
<dbReference type="PANTHER" id="PTHR10744:SF1">
    <property type="entry name" value="SMALL RIBOSOMAL SUBUNIT PROTEIN US17M"/>
    <property type="match status" value="1"/>
</dbReference>
<dbReference type="Pfam" id="PF00366">
    <property type="entry name" value="Ribosomal_S17"/>
    <property type="match status" value="1"/>
</dbReference>
<dbReference type="PRINTS" id="PR00973">
    <property type="entry name" value="RIBOSOMALS17"/>
</dbReference>
<dbReference type="SUPFAM" id="SSF50249">
    <property type="entry name" value="Nucleic acid-binding proteins"/>
    <property type="match status" value="1"/>
</dbReference>
<dbReference type="PROSITE" id="PS00056">
    <property type="entry name" value="RIBOSOMAL_S17"/>
    <property type="match status" value="1"/>
</dbReference>
<proteinExistence type="inferred from homology"/>
<accession>Q7VQD9</accession>
<comment type="function">
    <text evidence="1">One of the primary rRNA binding proteins, it binds specifically to the 5'-end of 16S ribosomal RNA.</text>
</comment>
<comment type="subunit">
    <text evidence="1">Part of the 30S ribosomal subunit.</text>
</comment>
<comment type="similarity">
    <text evidence="1">Belongs to the universal ribosomal protein uS17 family.</text>
</comment>
<organism>
    <name type="scientific">Blochmanniella floridana</name>
    <dbReference type="NCBI Taxonomy" id="203907"/>
    <lineage>
        <taxon>Bacteria</taxon>
        <taxon>Pseudomonadati</taxon>
        <taxon>Pseudomonadota</taxon>
        <taxon>Gammaproteobacteria</taxon>
        <taxon>Enterobacterales</taxon>
        <taxon>Enterobacteriaceae</taxon>
        <taxon>ant endosymbionts</taxon>
        <taxon>Candidatus Blochmanniella</taxon>
    </lineage>
</organism>
<feature type="chain" id="PRO_0000233433" description="Small ribosomal subunit protein uS17">
    <location>
        <begin position="1"/>
        <end position="85"/>
    </location>
</feature>
<protein>
    <recommendedName>
        <fullName evidence="1">Small ribosomal subunit protein uS17</fullName>
    </recommendedName>
    <alternativeName>
        <fullName evidence="2">30S ribosomal protein S17</fullName>
    </alternativeName>
</protein>
<sequence>MNNKVHVLQGIVIRSKMQKSIVVSINRIVKHSMYKKFINRTTKIYVHDTNNISNVGDIVEITECRPISKTKCWKLTSIIKKYNSS</sequence>
<reference key="1">
    <citation type="journal article" date="2003" name="Proc. Natl. Acad. Sci. U.S.A.">
        <title>The genome sequence of Blochmannia floridanus: comparative analysis of reduced genomes.</title>
        <authorList>
            <person name="Gil R."/>
            <person name="Silva F.J."/>
            <person name="Zientz E."/>
            <person name="Delmotte F."/>
            <person name="Gonzalez-Candelas F."/>
            <person name="Latorre A."/>
            <person name="Rausell C."/>
            <person name="Kamerbeek J."/>
            <person name="Gadau J."/>
            <person name="Hoelldobler B."/>
            <person name="van Ham R.C.H.J."/>
            <person name="Gross R."/>
            <person name="Moya A."/>
        </authorList>
    </citation>
    <scope>NUCLEOTIDE SEQUENCE [LARGE SCALE GENOMIC DNA]</scope>
</reference>
<keyword id="KW-1185">Reference proteome</keyword>
<keyword id="KW-0687">Ribonucleoprotein</keyword>
<keyword id="KW-0689">Ribosomal protein</keyword>
<keyword id="KW-0694">RNA-binding</keyword>
<keyword id="KW-0699">rRNA-binding</keyword>
<gene>
    <name evidence="1" type="primary">rpsQ</name>
    <name type="ordered locus">Bfl200</name>
</gene>
<evidence type="ECO:0000255" key="1">
    <source>
        <dbReference type="HAMAP-Rule" id="MF_01345"/>
    </source>
</evidence>
<evidence type="ECO:0000305" key="2"/>